<feature type="chain" id="PRO_0000211045" description="Probable U3 small nucleolar RNA-associated protein 11">
    <location>
        <begin position="1"/>
        <end position="262"/>
    </location>
</feature>
<feature type="region of interest" description="Disordered" evidence="2">
    <location>
        <begin position="1"/>
        <end position="33"/>
    </location>
</feature>
<feature type="region of interest" description="Disordered" evidence="2">
    <location>
        <begin position="56"/>
        <end position="80"/>
    </location>
</feature>
<feature type="compositionally biased region" description="Polar residues" evidence="2">
    <location>
        <begin position="1"/>
        <end position="14"/>
    </location>
</feature>
<feature type="compositionally biased region" description="Basic and acidic residues" evidence="2">
    <location>
        <begin position="19"/>
        <end position="33"/>
    </location>
</feature>
<feature type="compositionally biased region" description="Basic and acidic residues" evidence="2">
    <location>
        <begin position="56"/>
        <end position="69"/>
    </location>
</feature>
<organism>
    <name type="scientific">Caenorhabditis elegans</name>
    <dbReference type="NCBI Taxonomy" id="6239"/>
    <lineage>
        <taxon>Eukaryota</taxon>
        <taxon>Metazoa</taxon>
        <taxon>Ecdysozoa</taxon>
        <taxon>Nematoda</taxon>
        <taxon>Chromadorea</taxon>
        <taxon>Rhabditida</taxon>
        <taxon>Rhabditina</taxon>
        <taxon>Rhabditomorpha</taxon>
        <taxon>Rhabditoidea</taxon>
        <taxon>Rhabditidae</taxon>
        <taxon>Peloderinae</taxon>
        <taxon>Caenorhabditis</taxon>
    </lineage>
</organism>
<gene>
    <name type="ORF">C16C10.2</name>
</gene>
<sequence length="262" mass="30878">MSSLVSISKKLSGQRQHRERSQPEARRKYGELEKKKDYKLRAEDYQKKRDTIKKLKKSAMDKNQDEYHHHMVNSETWADGRHFDKKTEAEETETQIQKKLGSLKDLEYVKFKLNEEKKKIDEMKGELHFADSSLNGKGNTHTVFVDTDSEAKSFDPRVYFDTTTSMLSRQFNRLKNEDFQNKTIIGAGTKEQVRKADRVRRTRYNELIKRVERAKELQVVVDKLELKKQLAAGSKSELKPQKVKKAKAMRAAVYKWTYERKK</sequence>
<accession>Q09462</accession>
<reference key="1">
    <citation type="journal article" date="1998" name="Science">
        <title>Genome sequence of the nematode C. elegans: a platform for investigating biology.</title>
        <authorList>
            <consortium name="The C. elegans sequencing consortium"/>
        </authorList>
    </citation>
    <scope>NUCLEOTIDE SEQUENCE [LARGE SCALE GENOMIC DNA]</scope>
    <source>
        <strain>Bristol N2</strain>
    </source>
</reference>
<comment type="function">
    <text evidence="1">Involved in nucleolar processing of pre-18S ribosomal RNA.</text>
</comment>
<comment type="subunit">
    <text evidence="1">Component of the ribosomal small subunit (SSU) processome.</text>
</comment>
<comment type="subcellular location">
    <subcellularLocation>
        <location evidence="1">Nucleus</location>
        <location evidence="1">Nucleolus</location>
    </subcellularLocation>
</comment>
<comment type="similarity">
    <text evidence="3">Belongs to the UTP11 family.</text>
</comment>
<dbReference type="EMBL" id="Z46787">
    <property type="protein sequence ID" value="CAA86740.1"/>
    <property type="molecule type" value="Genomic_DNA"/>
</dbReference>
<dbReference type="PIR" id="T19323">
    <property type="entry name" value="T19323"/>
</dbReference>
<dbReference type="SMR" id="Q09462"/>
<dbReference type="BioGRID" id="40773">
    <property type="interactions" value="5"/>
</dbReference>
<dbReference type="FunCoup" id="Q09462">
    <property type="interactions" value="1942"/>
</dbReference>
<dbReference type="STRING" id="6239.C16C10.2.1"/>
<dbReference type="PaxDb" id="6239-C16C10.2"/>
<dbReference type="PeptideAtlas" id="Q09462"/>
<dbReference type="EnsemblMetazoa" id="C16C10.2.1">
    <property type="protein sequence ID" value="C16C10.2.1"/>
    <property type="gene ID" value="WBGene00007623"/>
</dbReference>
<dbReference type="KEGG" id="cel:CELE_C16C10.2"/>
<dbReference type="UCSC" id="C16C10.2.1">
    <property type="organism name" value="c. elegans"/>
</dbReference>
<dbReference type="AGR" id="WB:WBGene00007623"/>
<dbReference type="CTD" id="175536"/>
<dbReference type="WormBase" id="C16C10.2">
    <property type="protein sequence ID" value="CE01493"/>
    <property type="gene ID" value="WBGene00007623"/>
</dbReference>
<dbReference type="eggNOG" id="KOG3237">
    <property type="taxonomic scope" value="Eukaryota"/>
</dbReference>
<dbReference type="GeneTree" id="ENSGT00390000005813"/>
<dbReference type="HOGENOM" id="CLU_061887_2_1_1"/>
<dbReference type="InParanoid" id="Q09462"/>
<dbReference type="OMA" id="DLKYVVM"/>
<dbReference type="OrthoDB" id="29058at2759"/>
<dbReference type="PhylomeDB" id="Q09462"/>
<dbReference type="Reactome" id="R-CEL-6791226">
    <property type="pathway name" value="Major pathway of rRNA processing in the nucleolus and cytosol"/>
</dbReference>
<dbReference type="PRO" id="PR:Q09462"/>
<dbReference type="Proteomes" id="UP000001940">
    <property type="component" value="Chromosome III"/>
</dbReference>
<dbReference type="Bgee" id="WBGene00007623">
    <property type="expression patterns" value="Expressed in germ line (C elegans) and 4 other cell types or tissues"/>
</dbReference>
<dbReference type="GO" id="GO:0005730">
    <property type="term" value="C:nucleolus"/>
    <property type="evidence" value="ECO:0000318"/>
    <property type="project" value="GO_Central"/>
</dbReference>
<dbReference type="GO" id="GO:0032040">
    <property type="term" value="C:small-subunit processome"/>
    <property type="evidence" value="ECO:0000318"/>
    <property type="project" value="GO_Central"/>
</dbReference>
<dbReference type="GO" id="GO:0006364">
    <property type="term" value="P:rRNA processing"/>
    <property type="evidence" value="ECO:0007669"/>
    <property type="project" value="UniProtKB-KW"/>
</dbReference>
<dbReference type="GO" id="GO:0006412">
    <property type="term" value="P:translation"/>
    <property type="evidence" value="ECO:0000250"/>
    <property type="project" value="UniProtKB"/>
</dbReference>
<dbReference type="InterPro" id="IPR007144">
    <property type="entry name" value="SSU_processome_Utp11"/>
</dbReference>
<dbReference type="PANTHER" id="PTHR12838">
    <property type="entry name" value="U3 SMALL NUCLEOLAR RNA-ASSOCIATED PROTEIN 11"/>
    <property type="match status" value="1"/>
</dbReference>
<dbReference type="PANTHER" id="PTHR12838:SF0">
    <property type="entry name" value="U3 SMALL NUCLEOLAR RNA-ASSOCIATED PROTEIN 11-RELATED"/>
    <property type="match status" value="1"/>
</dbReference>
<dbReference type="Pfam" id="PF03998">
    <property type="entry name" value="Utp11"/>
    <property type="match status" value="1"/>
</dbReference>
<dbReference type="PIRSF" id="PIRSF015952">
    <property type="entry name" value="U3snoRNP11"/>
    <property type="match status" value="1"/>
</dbReference>
<protein>
    <recommendedName>
        <fullName>Probable U3 small nucleolar RNA-associated protein 11</fullName>
        <shortName>U3 snoRNA-associated protein 11</shortName>
    </recommendedName>
</protein>
<proteinExistence type="inferred from homology"/>
<name>UTP11_CAEEL</name>
<keyword id="KW-0539">Nucleus</keyword>
<keyword id="KW-1185">Reference proteome</keyword>
<keyword id="KW-0698">rRNA processing</keyword>
<evidence type="ECO:0000250" key="1"/>
<evidence type="ECO:0000256" key="2">
    <source>
        <dbReference type="SAM" id="MobiDB-lite"/>
    </source>
</evidence>
<evidence type="ECO:0000305" key="3"/>